<sequence length="149" mass="16803">MTESDTKITLIGSRLAREGLEFIFKGEMPECKKCRLKNTCLNLEPGRRYRVERIRSKDIHECFLHDSGVLAVDVSRAPILTTLESRKAVEGAKIMYEPAKCGKRECSVYEVCHPEGLLKGDKCKIVEVLESLDSKCEAGNSLKKVKLAW</sequence>
<dbReference type="EMBL" id="AE010299">
    <property type="protein sequence ID" value="AAM07040.1"/>
    <property type="molecule type" value="Genomic_DNA"/>
</dbReference>
<dbReference type="RefSeq" id="WP_011023592.1">
    <property type="nucleotide sequence ID" value="NC_003552.1"/>
</dbReference>
<dbReference type="FunCoup" id="Q8TJU2">
    <property type="interactions" value="2"/>
</dbReference>
<dbReference type="STRING" id="188937.MA_3685"/>
<dbReference type="EnsemblBacteria" id="AAM07040">
    <property type="protein sequence ID" value="AAM07040"/>
    <property type="gene ID" value="MA_3685"/>
</dbReference>
<dbReference type="GeneID" id="1475578"/>
<dbReference type="KEGG" id="mac:MA_3685"/>
<dbReference type="HOGENOM" id="CLU_121764_0_0_2"/>
<dbReference type="InParanoid" id="Q8TJU2"/>
<dbReference type="OrthoDB" id="24613at2157"/>
<dbReference type="PhylomeDB" id="Q8TJU2"/>
<dbReference type="Proteomes" id="UP000002487">
    <property type="component" value="Chromosome"/>
</dbReference>
<dbReference type="HAMAP" id="MF_00498">
    <property type="entry name" value="UPF0179"/>
    <property type="match status" value="1"/>
</dbReference>
<dbReference type="InterPro" id="IPR005369">
    <property type="entry name" value="UPF0179"/>
</dbReference>
<dbReference type="PANTHER" id="PTHR40699">
    <property type="entry name" value="UPF0179 PROTEIN MJ1627"/>
    <property type="match status" value="1"/>
</dbReference>
<dbReference type="PANTHER" id="PTHR40699:SF1">
    <property type="entry name" value="UPF0179 PROTEIN MJ1627"/>
    <property type="match status" value="1"/>
</dbReference>
<dbReference type="Pfam" id="PF03684">
    <property type="entry name" value="UPF0179"/>
    <property type="match status" value="1"/>
</dbReference>
<dbReference type="PIRSF" id="PIRSF006595">
    <property type="entry name" value="UCP006595"/>
    <property type="match status" value="1"/>
</dbReference>
<protein>
    <recommendedName>
        <fullName evidence="1">UPF0179 protein MA_3685</fullName>
    </recommendedName>
</protein>
<gene>
    <name type="ordered locus">MA_3685</name>
</gene>
<evidence type="ECO:0000255" key="1">
    <source>
        <dbReference type="HAMAP-Rule" id="MF_00498"/>
    </source>
</evidence>
<reference key="1">
    <citation type="journal article" date="2002" name="Genome Res.">
        <title>The genome of Methanosarcina acetivorans reveals extensive metabolic and physiological diversity.</title>
        <authorList>
            <person name="Galagan J.E."/>
            <person name="Nusbaum C."/>
            <person name="Roy A."/>
            <person name="Endrizzi M.G."/>
            <person name="Macdonald P."/>
            <person name="FitzHugh W."/>
            <person name="Calvo S."/>
            <person name="Engels R."/>
            <person name="Smirnov S."/>
            <person name="Atnoor D."/>
            <person name="Brown A."/>
            <person name="Allen N."/>
            <person name="Naylor J."/>
            <person name="Stange-Thomann N."/>
            <person name="DeArellano K."/>
            <person name="Johnson R."/>
            <person name="Linton L."/>
            <person name="McEwan P."/>
            <person name="McKernan K."/>
            <person name="Talamas J."/>
            <person name="Tirrell A."/>
            <person name="Ye W."/>
            <person name="Zimmer A."/>
            <person name="Barber R.D."/>
            <person name="Cann I."/>
            <person name="Graham D.E."/>
            <person name="Grahame D.A."/>
            <person name="Guss A.M."/>
            <person name="Hedderich R."/>
            <person name="Ingram-Smith C."/>
            <person name="Kuettner H.C."/>
            <person name="Krzycki J.A."/>
            <person name="Leigh J.A."/>
            <person name="Li W."/>
            <person name="Liu J."/>
            <person name="Mukhopadhyay B."/>
            <person name="Reeve J.N."/>
            <person name="Smith K."/>
            <person name="Springer T.A."/>
            <person name="Umayam L.A."/>
            <person name="White O."/>
            <person name="White R.H."/>
            <person name="de Macario E.C."/>
            <person name="Ferry J.G."/>
            <person name="Jarrell K.F."/>
            <person name="Jing H."/>
            <person name="Macario A.J.L."/>
            <person name="Paulsen I.T."/>
            <person name="Pritchett M."/>
            <person name="Sowers K.R."/>
            <person name="Swanson R.V."/>
            <person name="Zinder S.H."/>
            <person name="Lander E."/>
            <person name="Metcalf W.W."/>
            <person name="Birren B."/>
        </authorList>
    </citation>
    <scope>NUCLEOTIDE SEQUENCE [LARGE SCALE GENOMIC DNA]</scope>
    <source>
        <strain>ATCC 35395 / DSM 2834 / JCM 12185 / C2A</strain>
    </source>
</reference>
<proteinExistence type="inferred from homology"/>
<accession>Q8TJU2</accession>
<organism>
    <name type="scientific">Methanosarcina acetivorans (strain ATCC 35395 / DSM 2834 / JCM 12185 / C2A)</name>
    <dbReference type="NCBI Taxonomy" id="188937"/>
    <lineage>
        <taxon>Archaea</taxon>
        <taxon>Methanobacteriati</taxon>
        <taxon>Methanobacteriota</taxon>
        <taxon>Stenosarchaea group</taxon>
        <taxon>Methanomicrobia</taxon>
        <taxon>Methanosarcinales</taxon>
        <taxon>Methanosarcinaceae</taxon>
        <taxon>Methanosarcina</taxon>
    </lineage>
</organism>
<keyword id="KW-1185">Reference proteome</keyword>
<name>Y3685_METAC</name>
<feature type="chain" id="PRO_0000378127" description="UPF0179 protein MA_3685">
    <location>
        <begin position="1"/>
        <end position="149"/>
    </location>
</feature>
<comment type="similarity">
    <text evidence="1">Belongs to the UPF0179 family.</text>
</comment>